<gene>
    <name type="primary">Mlc1</name>
</gene>
<sequence>KKEKEQGCYGDFIECLKLYDKEENGTMMLAELQHALLALGESLDDEQVETLFADCMDPEDDEGFIPYSQFVQRLMSDPVVFD</sequence>
<protein>
    <recommendedName>
        <fullName>Myosin light chain alkali</fullName>
    </recommendedName>
</protein>
<reference key="1">
    <citation type="journal article" date="1996" name="Mol. Biol. Evol.">
        <title>Length variation and secondary structure of introns in the Mlc1 gene in six species of Drosophila.</title>
        <authorList>
            <person name="Clark A.G."/>
            <person name="Leicht B.G."/>
            <person name="Muse S.V."/>
        </authorList>
    </citation>
    <scope>NUCLEOTIDE SEQUENCE [GENOMIC DNA]</scope>
    <scope>ALTERNATIVE SPLICING</scope>
</reference>
<name>MLC1_DROSE</name>
<accession>Q24656</accession>
<accession>Q24655</accession>
<dbReference type="EMBL" id="L49009">
    <property type="protein sequence ID" value="AAC37274.1"/>
    <property type="molecule type" value="Genomic_DNA"/>
</dbReference>
<dbReference type="EMBL" id="L49009">
    <property type="protein sequence ID" value="AAC37275.1"/>
    <property type="molecule type" value="Genomic_DNA"/>
</dbReference>
<dbReference type="SMR" id="Q24656"/>
<dbReference type="ChiTaRS" id="Mlc1">
    <property type="organism name" value="fly"/>
</dbReference>
<dbReference type="GO" id="GO:0005859">
    <property type="term" value="C:muscle myosin complex"/>
    <property type="evidence" value="ECO:0000250"/>
    <property type="project" value="UniProtKB"/>
</dbReference>
<dbReference type="GO" id="GO:0005509">
    <property type="term" value="F:calcium ion binding"/>
    <property type="evidence" value="ECO:0007669"/>
    <property type="project" value="InterPro"/>
</dbReference>
<dbReference type="GO" id="GO:0007498">
    <property type="term" value="P:mesoderm development"/>
    <property type="evidence" value="ECO:0007669"/>
    <property type="project" value="EnsemblMetazoa"/>
</dbReference>
<dbReference type="FunFam" id="1.10.238.10:FF:000267">
    <property type="entry name" value="Myosin light chain alkali"/>
    <property type="match status" value="1"/>
</dbReference>
<dbReference type="Gene3D" id="1.10.238.10">
    <property type="entry name" value="EF-hand"/>
    <property type="match status" value="1"/>
</dbReference>
<dbReference type="InterPro" id="IPR050230">
    <property type="entry name" value="CALM/Myosin/TropC-like"/>
</dbReference>
<dbReference type="InterPro" id="IPR011992">
    <property type="entry name" value="EF-hand-dom_pair"/>
</dbReference>
<dbReference type="InterPro" id="IPR002048">
    <property type="entry name" value="EF_hand_dom"/>
</dbReference>
<dbReference type="PANTHER" id="PTHR23048">
    <property type="entry name" value="MYOSIN LIGHT CHAIN 1, 3"/>
    <property type="match status" value="1"/>
</dbReference>
<dbReference type="PANTHER" id="PTHR23048:SF33">
    <property type="entry name" value="MYOSIN LIGHT CHAIN ALKALI"/>
    <property type="match status" value="1"/>
</dbReference>
<dbReference type="Pfam" id="PF13499">
    <property type="entry name" value="EF-hand_7"/>
    <property type="match status" value="1"/>
</dbReference>
<dbReference type="SUPFAM" id="SSF47473">
    <property type="entry name" value="EF-hand"/>
    <property type="match status" value="1"/>
</dbReference>
<proteinExistence type="predicted"/>
<comment type="subunit">
    <text>Myosin is a hexamer of 2 heavy chains and 4 light chains.</text>
</comment>
<comment type="alternative products">
    <event type="alternative splicing"/>
    <isoform>
        <id>Q24656-1</id>
        <name>Larval-adult</name>
        <name>Larval-non-IFM</name>
        <sequence type="displayed"/>
    </isoform>
    <isoform>
        <id>Q24656-2</id>
        <name>Indirect flight muscle</name>
        <name>Pupa</name>
        <name>Adult flight muscle</name>
        <sequence type="described" ref="VSP_003369"/>
    </isoform>
</comment>
<feature type="chain" id="PRO_0000198711" description="Myosin light chain alkali">
    <location>
        <begin position="1" status="less than"/>
        <end position="82"/>
    </location>
</feature>
<feature type="domain" description="EF-hand">
    <location>
        <begin position="7"/>
        <end position="42"/>
    </location>
</feature>
<feature type="splice variant" id="VSP_003369" description="In isoform Indirect flight muscle." evidence="1">
    <original>QFVQRLMSDPVVFD</original>
    <variation>PFLARMCERPDQLK</variation>
    <location>
        <begin position="69"/>
        <end position="82"/>
    </location>
</feature>
<feature type="non-terminal residue">
    <location>
        <position position="1"/>
    </location>
</feature>
<evidence type="ECO:0000305" key="1"/>
<keyword id="KW-0025">Alternative splicing</keyword>
<keyword id="KW-0505">Motor protein</keyword>
<keyword id="KW-0514">Muscle protein</keyword>
<keyword id="KW-0518">Myosin</keyword>
<keyword id="KW-0677">Repeat</keyword>
<organism>
    <name type="scientific">Drosophila sechellia</name>
    <name type="common">Fruit fly</name>
    <dbReference type="NCBI Taxonomy" id="7238"/>
    <lineage>
        <taxon>Eukaryota</taxon>
        <taxon>Metazoa</taxon>
        <taxon>Ecdysozoa</taxon>
        <taxon>Arthropoda</taxon>
        <taxon>Hexapoda</taxon>
        <taxon>Insecta</taxon>
        <taxon>Pterygota</taxon>
        <taxon>Neoptera</taxon>
        <taxon>Endopterygota</taxon>
        <taxon>Diptera</taxon>
        <taxon>Brachycera</taxon>
        <taxon>Muscomorpha</taxon>
        <taxon>Ephydroidea</taxon>
        <taxon>Drosophilidae</taxon>
        <taxon>Drosophila</taxon>
        <taxon>Sophophora</taxon>
    </lineage>
</organism>